<reference evidence="6" key="1">
    <citation type="journal article" date="2005" name="Genome Res.">
        <title>Comparative genome sequencing of Drosophila pseudoobscura: chromosomal, gene, and cis-element evolution.</title>
        <authorList>
            <person name="Richards S."/>
            <person name="Liu Y."/>
            <person name="Bettencourt B.R."/>
            <person name="Hradecky P."/>
            <person name="Letovsky S."/>
            <person name="Nielsen R."/>
            <person name="Thornton K."/>
            <person name="Hubisz M.J."/>
            <person name="Chen R."/>
            <person name="Meisel R.P."/>
            <person name="Couronne O."/>
            <person name="Hua S."/>
            <person name="Smith M.A."/>
            <person name="Zhang P."/>
            <person name="Liu J."/>
            <person name="Bussemaker H.J."/>
            <person name="van Batenburg M.F."/>
            <person name="Howells S.L."/>
            <person name="Scherer S.E."/>
            <person name="Sodergren E."/>
            <person name="Matthews B.B."/>
            <person name="Crosby M.A."/>
            <person name="Schroeder A.J."/>
            <person name="Ortiz-Barrientos D."/>
            <person name="Rives C.M."/>
            <person name="Metzker M.L."/>
            <person name="Muzny D.M."/>
            <person name="Scott G."/>
            <person name="Steffen D."/>
            <person name="Wheeler D.A."/>
            <person name="Worley K.C."/>
            <person name="Havlak P."/>
            <person name="Durbin K.J."/>
            <person name="Egan A."/>
            <person name="Gill R."/>
            <person name="Hume J."/>
            <person name="Morgan M.B."/>
            <person name="Miner G."/>
            <person name="Hamilton C."/>
            <person name="Huang Y."/>
            <person name="Waldron L."/>
            <person name="Verduzco D."/>
            <person name="Clerc-Blankenburg K.P."/>
            <person name="Dubchak I."/>
            <person name="Noor M.A.F."/>
            <person name="Anderson W."/>
            <person name="White K.P."/>
            <person name="Clark A.G."/>
            <person name="Schaeffer S.W."/>
            <person name="Gelbart W.M."/>
            <person name="Weinstock G.M."/>
            <person name="Gibbs R.A."/>
        </authorList>
    </citation>
    <scope>NUCLEOTIDE SEQUENCE [LARGE SCALE GENOMIC DNA]</scope>
    <source>
        <strain>MV2-25 / Tucson 14011-0121.94</strain>
    </source>
</reference>
<accession>Q290L5</accession>
<sequence length="255" mass="28760">MVDRVAALCNYNVLEVVFSYLDLNDLGRCSQVCKSWFHFLNDENSDVWRFHCLNKLPKEVTKSELLSPVPTYKTKLRAFFHSWNPSDCSRNVYIKPNGFTLHRNPVAQSTDAARAKIGFRHGRHAWEVIWEGPLGTVAVIGISTKEAALQCHGYVALLGSDDQSWGWNLVENHLLHNGDMQGGYPLLNNAPKYQVGERIRVILDCDDNTLSFEKNYEFLGVAFRGLPDKKLFPTVSAVYGNTEVSMVYCGTPLDG</sequence>
<comment type="function">
    <text evidence="1">Required in the presynaptic motoneuron to down-regulate the levels of wnd and restrain synaptic terminal growth at the neuromuscular junction (NMJ).</text>
</comment>
<comment type="pathway">
    <text evidence="2">Protein modification; protein ubiquitination.</text>
</comment>
<comment type="subunit">
    <text evidence="2">Component of an E3 ubiquitin ligase complex composed of hiw and Fsn.</text>
</comment>
<comment type="subcellular location">
    <subcellularLocation>
        <location evidence="2">Synapse</location>
    </subcellularLocation>
</comment>
<comment type="similarity">
    <text evidence="5">Belongs to the FBXO45/Fsn family.</text>
</comment>
<name>FBSP1_DROPS</name>
<dbReference type="EMBL" id="CM000071">
    <property type="protein sequence ID" value="EAL25347.1"/>
    <property type="molecule type" value="Genomic_DNA"/>
</dbReference>
<dbReference type="RefSeq" id="XP_001360772.1">
    <property type="nucleotide sequence ID" value="XM_001360735.3"/>
</dbReference>
<dbReference type="SMR" id="Q290L5"/>
<dbReference type="FunCoup" id="Q290L5">
    <property type="interactions" value="1239"/>
</dbReference>
<dbReference type="STRING" id="46245.Q290L5"/>
<dbReference type="EnsemblMetazoa" id="FBtr0278223">
    <property type="protein sequence ID" value="FBpp0276661"/>
    <property type="gene ID" value="FBgn0078328"/>
</dbReference>
<dbReference type="GeneID" id="4804168"/>
<dbReference type="KEGG" id="dpo:4804168"/>
<dbReference type="CTD" id="36460"/>
<dbReference type="eggNOG" id="KOG3953">
    <property type="taxonomic scope" value="Eukaryota"/>
</dbReference>
<dbReference type="HOGENOM" id="CLU_046756_1_0_1"/>
<dbReference type="InParanoid" id="Q290L5"/>
<dbReference type="OMA" id="ATKRASM"/>
<dbReference type="PhylomeDB" id="Q290L5"/>
<dbReference type="UniPathway" id="UPA00143"/>
<dbReference type="Proteomes" id="UP000001819">
    <property type="component" value="Chromosome 3"/>
</dbReference>
<dbReference type="Bgee" id="FBgn0078328">
    <property type="expression patterns" value="Expressed in female reproductive system and 2 other cell types or tissues"/>
</dbReference>
<dbReference type="GO" id="GO:0031594">
    <property type="term" value="C:neuromuscular junction"/>
    <property type="evidence" value="ECO:0000250"/>
    <property type="project" value="UniProtKB"/>
</dbReference>
<dbReference type="GO" id="GO:0019005">
    <property type="term" value="C:SCF ubiquitin ligase complex"/>
    <property type="evidence" value="ECO:0007669"/>
    <property type="project" value="TreeGrafter"/>
</dbReference>
<dbReference type="GO" id="GO:0045886">
    <property type="term" value="P:negative regulation of synaptic assembly at neuromuscular junction"/>
    <property type="evidence" value="ECO:0000250"/>
    <property type="project" value="UniProtKB"/>
</dbReference>
<dbReference type="GO" id="GO:0007274">
    <property type="term" value="P:neuromuscular synaptic transmission"/>
    <property type="evidence" value="ECO:0000250"/>
    <property type="project" value="UniProtKB"/>
</dbReference>
<dbReference type="GO" id="GO:0043161">
    <property type="term" value="P:proteasome-mediated ubiquitin-dependent protein catabolic process"/>
    <property type="evidence" value="ECO:0007669"/>
    <property type="project" value="TreeGrafter"/>
</dbReference>
<dbReference type="GO" id="GO:0016567">
    <property type="term" value="P:protein ubiquitination"/>
    <property type="evidence" value="ECO:0007669"/>
    <property type="project" value="UniProtKB-UniPathway"/>
</dbReference>
<dbReference type="GO" id="GO:0060386">
    <property type="term" value="P:synapse assembly involved in innervation"/>
    <property type="evidence" value="ECO:0007669"/>
    <property type="project" value="TreeGrafter"/>
</dbReference>
<dbReference type="CDD" id="cd12907">
    <property type="entry name" value="SPRY_Fbox"/>
    <property type="match status" value="1"/>
</dbReference>
<dbReference type="FunFam" id="1.20.1280.50:FF:000069">
    <property type="entry name" value="F-box/SPRY domain-containing protein 1"/>
    <property type="match status" value="1"/>
</dbReference>
<dbReference type="FunFam" id="2.60.120.920:FF:000017">
    <property type="entry name" value="F-box/SPRY domain-containing protein 1"/>
    <property type="match status" value="1"/>
</dbReference>
<dbReference type="Gene3D" id="1.20.1280.50">
    <property type="match status" value="1"/>
</dbReference>
<dbReference type="Gene3D" id="2.60.120.920">
    <property type="match status" value="1"/>
</dbReference>
<dbReference type="InterPro" id="IPR001870">
    <property type="entry name" value="B30.2/SPRY"/>
</dbReference>
<dbReference type="InterPro" id="IPR043136">
    <property type="entry name" value="B30.2/SPRY_sf"/>
</dbReference>
<dbReference type="InterPro" id="IPR013320">
    <property type="entry name" value="ConA-like_dom_sf"/>
</dbReference>
<dbReference type="InterPro" id="IPR036047">
    <property type="entry name" value="F-box-like_dom_sf"/>
</dbReference>
<dbReference type="InterPro" id="IPR001810">
    <property type="entry name" value="F-box_dom"/>
</dbReference>
<dbReference type="InterPro" id="IPR050672">
    <property type="entry name" value="FBXO45-Fsn/SPSB_families"/>
</dbReference>
<dbReference type="InterPro" id="IPR003877">
    <property type="entry name" value="SPRY_dom"/>
</dbReference>
<dbReference type="InterPro" id="IPR035784">
    <property type="entry name" value="SPRY_FBXO45"/>
</dbReference>
<dbReference type="PANTHER" id="PTHR12245:SF7">
    <property type="entry name" value="F-BOX_SPRY DOMAIN-CONTAINING PROTEIN 1"/>
    <property type="match status" value="1"/>
</dbReference>
<dbReference type="PANTHER" id="PTHR12245">
    <property type="entry name" value="SPRY DOMAIN CONTAINING SOCS BOX PROTEIN"/>
    <property type="match status" value="1"/>
</dbReference>
<dbReference type="Pfam" id="PF12937">
    <property type="entry name" value="F-box-like"/>
    <property type="match status" value="1"/>
</dbReference>
<dbReference type="Pfam" id="PF00622">
    <property type="entry name" value="SPRY"/>
    <property type="match status" value="1"/>
</dbReference>
<dbReference type="SMART" id="SM00449">
    <property type="entry name" value="SPRY"/>
    <property type="match status" value="1"/>
</dbReference>
<dbReference type="SUPFAM" id="SSF49899">
    <property type="entry name" value="Concanavalin A-like lectins/glucanases"/>
    <property type="match status" value="1"/>
</dbReference>
<dbReference type="SUPFAM" id="SSF81383">
    <property type="entry name" value="F-box domain"/>
    <property type="match status" value="1"/>
</dbReference>
<dbReference type="PROSITE" id="PS50188">
    <property type="entry name" value="B302_SPRY"/>
    <property type="match status" value="1"/>
</dbReference>
<organism>
    <name type="scientific">Drosophila pseudoobscura pseudoobscura</name>
    <name type="common">Fruit fly</name>
    <dbReference type="NCBI Taxonomy" id="46245"/>
    <lineage>
        <taxon>Eukaryota</taxon>
        <taxon>Metazoa</taxon>
        <taxon>Ecdysozoa</taxon>
        <taxon>Arthropoda</taxon>
        <taxon>Hexapoda</taxon>
        <taxon>Insecta</taxon>
        <taxon>Pterygota</taxon>
        <taxon>Neoptera</taxon>
        <taxon>Endopterygota</taxon>
        <taxon>Diptera</taxon>
        <taxon>Brachycera</taxon>
        <taxon>Muscomorpha</taxon>
        <taxon>Ephydroidea</taxon>
        <taxon>Drosophilidae</taxon>
        <taxon>Drosophila</taxon>
        <taxon>Sophophora</taxon>
    </lineage>
</organism>
<feature type="chain" id="PRO_0000383315" description="F-box/SPRY domain-containing protein 1">
    <location>
        <begin position="1"/>
        <end position="255"/>
    </location>
</feature>
<feature type="domain" description="F-box" evidence="3">
    <location>
        <begin position="3"/>
        <end position="51"/>
    </location>
</feature>
<feature type="domain" description="B30.2/SPRY" evidence="4">
    <location>
        <begin position="61"/>
        <end position="253"/>
    </location>
</feature>
<keyword id="KW-0524">Neurogenesis</keyword>
<keyword id="KW-1185">Reference proteome</keyword>
<keyword id="KW-0770">Synapse</keyword>
<keyword id="KW-0833">Ubl conjugation pathway</keyword>
<protein>
    <recommendedName>
        <fullName evidence="2">F-box/SPRY domain-containing protein 1</fullName>
    </recommendedName>
</protein>
<proteinExistence type="inferred from homology"/>
<evidence type="ECO:0000250" key="1"/>
<evidence type="ECO:0000250" key="2">
    <source>
        <dbReference type="UniProtKB" id="Q9V6L9"/>
    </source>
</evidence>
<evidence type="ECO:0000255" key="3"/>
<evidence type="ECO:0000255" key="4">
    <source>
        <dbReference type="PROSITE-ProRule" id="PRU00548"/>
    </source>
</evidence>
<evidence type="ECO:0000305" key="5"/>
<evidence type="ECO:0000312" key="6">
    <source>
        <dbReference type="EMBL" id="EAL25347.1"/>
    </source>
</evidence>
<gene>
    <name evidence="2" type="primary">Fsn</name>
    <name type="ORF">GA18323</name>
</gene>